<organism>
    <name type="scientific">Azotobacter vinelandii (strain DJ / ATCC BAA-1303)</name>
    <dbReference type="NCBI Taxonomy" id="322710"/>
    <lineage>
        <taxon>Bacteria</taxon>
        <taxon>Pseudomonadati</taxon>
        <taxon>Pseudomonadota</taxon>
        <taxon>Gammaproteobacteria</taxon>
        <taxon>Pseudomonadales</taxon>
        <taxon>Pseudomonadaceae</taxon>
        <taxon>Azotobacter</taxon>
    </lineage>
</organism>
<protein>
    <recommendedName>
        <fullName evidence="1">DNA mismatch repair protein MutL</fullName>
    </recommendedName>
</protein>
<feature type="chain" id="PRO_1000203382" description="DNA mismatch repair protein MutL">
    <location>
        <begin position="1"/>
        <end position="641"/>
    </location>
</feature>
<feature type="region of interest" description="Disordered" evidence="2">
    <location>
        <begin position="345"/>
        <end position="445"/>
    </location>
</feature>
<feature type="compositionally biased region" description="Basic and acidic residues" evidence="2">
    <location>
        <begin position="419"/>
        <end position="429"/>
    </location>
</feature>
<feature type="compositionally biased region" description="Polar residues" evidence="2">
    <location>
        <begin position="432"/>
        <end position="442"/>
    </location>
</feature>
<sequence>MSGPARIQLLSLRLANQIAAGEVVERPASVAKELLENSLDAGARRVDIEVEQGGVKLLRVRDDGCGIAADDLPLALARHATSKIRELEDLERVASLGFRGEALASIGSVARLTLTSRTADAGQAWQVETEGRDMEARVQPAAYPVGTSVEVRDLFFNTPARRKFLRAEKTEFEHLQEVVRRLALARFDVAFHLRHNGRSALALHEAGDETARARRVAAVCGPAFLEQALPIEVERAGLRLWGWVGLPTFSRSQADLQYFYVNGRMVRDKLVAHAVRQAYRDVLFNGRHPTFVLFLEVDPAVVDVNVHPTKHEVRFRDSRMIHDFLYGTLHRVLGEVRPEDRLAAPAAVAPPAPASGAAAGEFRGQEEMPLSATPPAREPARPAAWKGAGAGYQAPSPRPARSAEAGGVYREFFAPLAEPRTEPATRTGEESGISSGDTSLGDTSPGGIPPLGYALAQLKGIYILAENAQGLVLVDMHAAHERITYERLKTAMASEGLRGQPLLVPEGLALSQREADCAEEHAEWFQRLGFELQRLGPETLAIRQTPALLRQAEAGQLVRDVLADLLEYGSSDRIEAHLNELLATMACHGSVRANRRLTLPEMNALLRDMESTERSGQCNHGRPTWTQLGMADLDKLFLRGR</sequence>
<accession>C1DLQ0</accession>
<proteinExistence type="inferred from homology"/>
<keyword id="KW-0227">DNA damage</keyword>
<keyword id="KW-0234">DNA repair</keyword>
<name>MUTL_AZOVD</name>
<comment type="function">
    <text evidence="1">This protein is involved in the repair of mismatches in DNA. It is required for dam-dependent methyl-directed DNA mismatch repair. May act as a 'molecular matchmaker', a protein that promotes the formation of a stable complex between two or more DNA-binding proteins in an ATP-dependent manner without itself being part of a final effector complex.</text>
</comment>
<comment type="similarity">
    <text evidence="1">Belongs to the DNA mismatch repair MutL/HexB family.</text>
</comment>
<reference key="1">
    <citation type="journal article" date="2009" name="J. Bacteriol.">
        <title>Genome sequence of Azotobacter vinelandii, an obligate aerobe specialized to support diverse anaerobic metabolic processes.</title>
        <authorList>
            <person name="Setubal J.C."/>
            <person name="Dos Santos P."/>
            <person name="Goldman B.S."/>
            <person name="Ertesvaag H."/>
            <person name="Espin G."/>
            <person name="Rubio L.M."/>
            <person name="Valla S."/>
            <person name="Almeida N.F."/>
            <person name="Balasubramanian D."/>
            <person name="Cromes L."/>
            <person name="Curatti L."/>
            <person name="Du Z."/>
            <person name="Godsy E."/>
            <person name="Goodner B."/>
            <person name="Hellner-Burris K."/>
            <person name="Hernandez J.A."/>
            <person name="Houmiel K."/>
            <person name="Imperial J."/>
            <person name="Kennedy C."/>
            <person name="Larson T.J."/>
            <person name="Latreille P."/>
            <person name="Ligon L.S."/>
            <person name="Lu J."/>
            <person name="Maerk M."/>
            <person name="Miller N.M."/>
            <person name="Norton S."/>
            <person name="O'Carroll I.P."/>
            <person name="Paulsen I."/>
            <person name="Raulfs E.C."/>
            <person name="Roemer R."/>
            <person name="Rosser J."/>
            <person name="Segura D."/>
            <person name="Slater S."/>
            <person name="Stricklin S.L."/>
            <person name="Studholme D.J."/>
            <person name="Sun J."/>
            <person name="Viana C.J."/>
            <person name="Wallin E."/>
            <person name="Wang B."/>
            <person name="Wheeler C."/>
            <person name="Zhu H."/>
            <person name="Dean D.R."/>
            <person name="Dixon R."/>
            <person name="Wood D."/>
        </authorList>
    </citation>
    <scope>NUCLEOTIDE SEQUENCE [LARGE SCALE GENOMIC DNA]</scope>
    <source>
        <strain>DJ / ATCC BAA-1303</strain>
    </source>
</reference>
<evidence type="ECO:0000255" key="1">
    <source>
        <dbReference type="HAMAP-Rule" id="MF_00149"/>
    </source>
</evidence>
<evidence type="ECO:0000256" key="2">
    <source>
        <dbReference type="SAM" id="MobiDB-lite"/>
    </source>
</evidence>
<dbReference type="EMBL" id="CP001157">
    <property type="protein sequence ID" value="ACO76998.1"/>
    <property type="molecule type" value="Genomic_DNA"/>
</dbReference>
<dbReference type="RefSeq" id="WP_012699423.1">
    <property type="nucleotide sequence ID" value="NC_012560.1"/>
</dbReference>
<dbReference type="SMR" id="C1DLQ0"/>
<dbReference type="STRING" id="322710.Avin_07520"/>
<dbReference type="EnsemblBacteria" id="ACO76998">
    <property type="protein sequence ID" value="ACO76998"/>
    <property type="gene ID" value="Avin_07520"/>
</dbReference>
<dbReference type="GeneID" id="88184148"/>
<dbReference type="KEGG" id="avn:Avin_07520"/>
<dbReference type="eggNOG" id="COG0323">
    <property type="taxonomic scope" value="Bacteria"/>
</dbReference>
<dbReference type="HOGENOM" id="CLU_004131_4_2_6"/>
<dbReference type="OrthoDB" id="9763467at2"/>
<dbReference type="Proteomes" id="UP000002424">
    <property type="component" value="Chromosome"/>
</dbReference>
<dbReference type="GO" id="GO:0032300">
    <property type="term" value="C:mismatch repair complex"/>
    <property type="evidence" value="ECO:0007669"/>
    <property type="project" value="InterPro"/>
</dbReference>
<dbReference type="GO" id="GO:0005524">
    <property type="term" value="F:ATP binding"/>
    <property type="evidence" value="ECO:0007669"/>
    <property type="project" value="InterPro"/>
</dbReference>
<dbReference type="GO" id="GO:0016887">
    <property type="term" value="F:ATP hydrolysis activity"/>
    <property type="evidence" value="ECO:0007669"/>
    <property type="project" value="InterPro"/>
</dbReference>
<dbReference type="GO" id="GO:0140664">
    <property type="term" value="F:ATP-dependent DNA damage sensor activity"/>
    <property type="evidence" value="ECO:0007669"/>
    <property type="project" value="InterPro"/>
</dbReference>
<dbReference type="GO" id="GO:0030983">
    <property type="term" value="F:mismatched DNA binding"/>
    <property type="evidence" value="ECO:0007669"/>
    <property type="project" value="InterPro"/>
</dbReference>
<dbReference type="GO" id="GO:0006298">
    <property type="term" value="P:mismatch repair"/>
    <property type="evidence" value="ECO:0007669"/>
    <property type="project" value="UniProtKB-UniRule"/>
</dbReference>
<dbReference type="CDD" id="cd16926">
    <property type="entry name" value="HATPase_MutL-MLH-PMS-like"/>
    <property type="match status" value="1"/>
</dbReference>
<dbReference type="CDD" id="cd03482">
    <property type="entry name" value="MutL_Trans_MutL"/>
    <property type="match status" value="1"/>
</dbReference>
<dbReference type="FunFam" id="3.30.230.10:FF:000013">
    <property type="entry name" value="DNA mismatch repair endonuclease MutL"/>
    <property type="match status" value="1"/>
</dbReference>
<dbReference type="FunFam" id="3.30.565.10:FF:000003">
    <property type="entry name" value="DNA mismatch repair endonuclease MutL"/>
    <property type="match status" value="1"/>
</dbReference>
<dbReference type="FunFam" id="3.30.1370.100:FF:000005">
    <property type="entry name" value="DNA mismatch repair protein MutL"/>
    <property type="match status" value="1"/>
</dbReference>
<dbReference type="Gene3D" id="3.30.230.10">
    <property type="match status" value="1"/>
</dbReference>
<dbReference type="Gene3D" id="3.30.565.10">
    <property type="entry name" value="Histidine kinase-like ATPase, C-terminal domain"/>
    <property type="match status" value="1"/>
</dbReference>
<dbReference type="Gene3D" id="3.30.1540.20">
    <property type="entry name" value="MutL, C-terminal domain, dimerisation subdomain"/>
    <property type="match status" value="1"/>
</dbReference>
<dbReference type="Gene3D" id="3.30.1370.100">
    <property type="entry name" value="MutL, C-terminal domain, regulatory subdomain"/>
    <property type="match status" value="1"/>
</dbReference>
<dbReference type="HAMAP" id="MF_00149">
    <property type="entry name" value="DNA_mis_repair"/>
    <property type="match status" value="1"/>
</dbReference>
<dbReference type="InterPro" id="IPR014762">
    <property type="entry name" value="DNA_mismatch_repair_CS"/>
</dbReference>
<dbReference type="InterPro" id="IPR020667">
    <property type="entry name" value="DNA_mismatch_repair_MutL"/>
</dbReference>
<dbReference type="InterPro" id="IPR013507">
    <property type="entry name" value="DNA_mismatch_S5_2-like"/>
</dbReference>
<dbReference type="InterPro" id="IPR036890">
    <property type="entry name" value="HATPase_C_sf"/>
</dbReference>
<dbReference type="InterPro" id="IPR002099">
    <property type="entry name" value="MutL/Mlh/PMS"/>
</dbReference>
<dbReference type="InterPro" id="IPR038973">
    <property type="entry name" value="MutL/Mlh/Pms-like"/>
</dbReference>
<dbReference type="InterPro" id="IPR014790">
    <property type="entry name" value="MutL_C"/>
</dbReference>
<dbReference type="InterPro" id="IPR042120">
    <property type="entry name" value="MutL_C_dimsub"/>
</dbReference>
<dbReference type="InterPro" id="IPR042121">
    <property type="entry name" value="MutL_C_regsub"/>
</dbReference>
<dbReference type="InterPro" id="IPR037198">
    <property type="entry name" value="MutL_C_sf"/>
</dbReference>
<dbReference type="InterPro" id="IPR020568">
    <property type="entry name" value="Ribosomal_Su5_D2-typ_SF"/>
</dbReference>
<dbReference type="InterPro" id="IPR014721">
    <property type="entry name" value="Ribsml_uS5_D2-typ_fold_subgr"/>
</dbReference>
<dbReference type="NCBIfam" id="TIGR00585">
    <property type="entry name" value="mutl"/>
    <property type="match status" value="1"/>
</dbReference>
<dbReference type="NCBIfam" id="NF000949">
    <property type="entry name" value="PRK00095.1-2"/>
    <property type="match status" value="1"/>
</dbReference>
<dbReference type="PANTHER" id="PTHR10073">
    <property type="entry name" value="DNA MISMATCH REPAIR PROTEIN MLH, PMS, MUTL"/>
    <property type="match status" value="1"/>
</dbReference>
<dbReference type="PANTHER" id="PTHR10073:SF12">
    <property type="entry name" value="DNA MISMATCH REPAIR PROTEIN MLH1"/>
    <property type="match status" value="1"/>
</dbReference>
<dbReference type="Pfam" id="PF01119">
    <property type="entry name" value="DNA_mis_repair"/>
    <property type="match status" value="1"/>
</dbReference>
<dbReference type="Pfam" id="PF13589">
    <property type="entry name" value="HATPase_c_3"/>
    <property type="match status" value="1"/>
</dbReference>
<dbReference type="Pfam" id="PF08676">
    <property type="entry name" value="MutL_C"/>
    <property type="match status" value="1"/>
</dbReference>
<dbReference type="SMART" id="SM01340">
    <property type="entry name" value="DNA_mis_repair"/>
    <property type="match status" value="1"/>
</dbReference>
<dbReference type="SMART" id="SM00853">
    <property type="entry name" value="MutL_C"/>
    <property type="match status" value="1"/>
</dbReference>
<dbReference type="SUPFAM" id="SSF55874">
    <property type="entry name" value="ATPase domain of HSP90 chaperone/DNA topoisomerase II/histidine kinase"/>
    <property type="match status" value="1"/>
</dbReference>
<dbReference type="SUPFAM" id="SSF118116">
    <property type="entry name" value="DNA mismatch repair protein MutL"/>
    <property type="match status" value="1"/>
</dbReference>
<dbReference type="SUPFAM" id="SSF54211">
    <property type="entry name" value="Ribosomal protein S5 domain 2-like"/>
    <property type="match status" value="1"/>
</dbReference>
<dbReference type="PROSITE" id="PS00058">
    <property type="entry name" value="DNA_MISMATCH_REPAIR_1"/>
    <property type="match status" value="1"/>
</dbReference>
<gene>
    <name evidence="1" type="primary">mutL</name>
    <name type="ordered locus">Avin_07520</name>
</gene>